<sequence>MAWKSGGASHSELIHNLRKNGIIKTDKVFEVMLATDRSHYAKCNPYMDSPQSIGFQATISAPHMHAYALELLFDQLNEGAKALDVGSGSGILTACFARMVGPSGKVIGIDHIKELVDDSINNVRKDDPMLLSSGRVQLVVGDGRMGYAAEAPYDAIHVGAAAPVVPQALIDQLKPGGRLILPVGPAGGNQMLEQYDKLQDGSVKMKPLMGVIYVPLTDKEKQWSRWK</sequence>
<comment type="function">
    <text evidence="2">Initiates the repair of damaged proteins by catalyzing methyl esterification of L-isoaspartyl and D-aspartyl residues produced by spontaneous isomerization and racemization of L-aspartyl and L-asparaginyl residues in aging peptides and proteins (By similarity). Acts on EIF4EBP2, microtubule-associated protein 2, calreticulin, clathrin light chains a and b, Ubiquitin C-terminal hydrolase isozyme L1, phosphatidylethanolamine-binding protein 1, stathmin, beta-synuclein and alpha-synuclein (By similarity).</text>
</comment>
<comment type="catalytic activity">
    <reaction evidence="2">
        <text>[protein]-L-isoaspartate + S-adenosyl-L-methionine = [protein]-L-isoaspartate alpha-methyl ester + S-adenosyl-L-homocysteine</text>
        <dbReference type="Rhea" id="RHEA:12705"/>
        <dbReference type="Rhea" id="RHEA-COMP:12143"/>
        <dbReference type="Rhea" id="RHEA-COMP:12144"/>
        <dbReference type="ChEBI" id="CHEBI:57856"/>
        <dbReference type="ChEBI" id="CHEBI:59789"/>
        <dbReference type="ChEBI" id="CHEBI:90596"/>
        <dbReference type="ChEBI" id="CHEBI:90598"/>
        <dbReference type="EC" id="2.1.1.77"/>
    </reaction>
    <physiologicalReaction direction="left-to-right" evidence="2">
        <dbReference type="Rhea" id="RHEA:12706"/>
    </physiologicalReaction>
</comment>
<comment type="subunit">
    <text evidence="1">Monomer.</text>
</comment>
<comment type="subcellular location">
    <subcellularLocation>
        <location evidence="1">Cytoplasm</location>
        <location evidence="1">Cytosol</location>
    </subcellularLocation>
</comment>
<comment type="alternative products">
    <event type="alternative splicing"/>
    <isoform>
        <id>P15246-1</id>
        <name>1</name>
        <sequence type="displayed"/>
    </isoform>
    <isoform>
        <id>P15246-2</id>
        <name>2</name>
        <sequence type="described" ref="VSP_012044"/>
    </isoform>
</comment>
<comment type="similarity">
    <text evidence="4">Belongs to the methyltransferase superfamily. L-isoaspartyl/D-aspartyl protein methyltransferase family.</text>
</comment>
<proteinExistence type="evidence at protein level"/>
<evidence type="ECO:0000250" key="1">
    <source>
        <dbReference type="UniProtKB" id="P22061"/>
    </source>
</evidence>
<evidence type="ECO:0000250" key="2">
    <source>
        <dbReference type="UniProtKB" id="P23506"/>
    </source>
</evidence>
<evidence type="ECO:0000250" key="3">
    <source>
        <dbReference type="UniProtKB" id="Q27869"/>
    </source>
</evidence>
<evidence type="ECO:0000305" key="4"/>
<accession>P15246</accession>
<accession>Q32LB2</accession>
<name>PIMT_BOVIN</name>
<protein>
    <recommendedName>
        <fullName evidence="2">Protein-L-isoaspartate(D-aspartate) O-methyltransferase</fullName>
        <shortName>PIMT</shortName>
        <ecNumber evidence="2">2.1.1.77</ecNumber>
    </recommendedName>
    <alternativeName>
        <fullName>L-isoaspartyl protein carboxyl methyltransferase</fullName>
    </alternativeName>
    <alternativeName>
        <fullName>Protein L-isoaspartyl/D-aspartyl methyltransferase</fullName>
    </alternativeName>
    <alternativeName>
        <fullName>Protein-beta-aspartate methyltransferase</fullName>
    </alternativeName>
</protein>
<organism>
    <name type="scientific">Bos taurus</name>
    <name type="common">Bovine</name>
    <dbReference type="NCBI Taxonomy" id="9913"/>
    <lineage>
        <taxon>Eukaryota</taxon>
        <taxon>Metazoa</taxon>
        <taxon>Chordata</taxon>
        <taxon>Craniata</taxon>
        <taxon>Vertebrata</taxon>
        <taxon>Euteleostomi</taxon>
        <taxon>Mammalia</taxon>
        <taxon>Eutheria</taxon>
        <taxon>Laurasiatheria</taxon>
        <taxon>Artiodactyla</taxon>
        <taxon>Ruminantia</taxon>
        <taxon>Pecora</taxon>
        <taxon>Bovidae</taxon>
        <taxon>Bovinae</taxon>
        <taxon>Bos</taxon>
    </lineage>
</organism>
<gene>
    <name type="primary">PCMT1</name>
</gene>
<keyword id="KW-0007">Acetylation</keyword>
<keyword id="KW-0025">Alternative splicing</keyword>
<keyword id="KW-0963">Cytoplasm</keyword>
<keyword id="KW-0903">Direct protein sequencing</keyword>
<keyword id="KW-0489">Methyltransferase</keyword>
<keyword id="KW-1185">Reference proteome</keyword>
<keyword id="KW-0949">S-adenosyl-L-methionine</keyword>
<keyword id="KW-0808">Transferase</keyword>
<reference key="1">
    <citation type="submission" date="2005-11" db="EMBL/GenBank/DDBJ databases">
        <authorList>
            <consortium name="NIH - Mammalian Gene Collection (MGC) project"/>
        </authorList>
    </citation>
    <scope>NUCLEOTIDE SEQUENCE [LARGE SCALE MRNA] (ISOFORM 1)</scope>
    <source>
        <strain>Crossbred X Angus</strain>
        <tissue>Liver</tissue>
    </source>
</reference>
<reference key="2">
    <citation type="journal article" date="1989" name="J. Biol. Chem.">
        <title>The primary structure of a protein carboxyl methyltransferase from bovine brain that selectively methylates L-isoaspartyl sites.</title>
        <authorList>
            <person name="Henzel W.J."/>
            <person name="Stults J.T."/>
            <person name="Hsu C.-A."/>
            <person name="Aswad D.W."/>
        </authorList>
    </citation>
    <scope>PROTEIN SEQUENCE OF 2-227 (ISOFORM 1)</scope>
    <source>
        <tissue>Brain</tissue>
    </source>
</reference>
<reference key="3">
    <citation type="journal article" date="1988" name="Biochemistry">
        <title>Purification of homologous protein carboxyl methyltransferase isozymes from human and bovine erythrocytes.</title>
        <authorList>
            <person name="Gilbert J.M."/>
            <person name="Fowler A."/>
            <person name="Bleibaum J."/>
            <person name="Clarke S."/>
        </authorList>
    </citation>
    <scope>PROTEIN SEQUENCE OF 5-17; 37-62; 106-133 AND 136-221</scope>
</reference>
<reference key="4">
    <citation type="journal article" date="1992" name="Biochemistry">
        <title>The type II isoform of bovine brain protein L-isoaspartyl methyltransferase has an endoplasmic reticulum retention signal (RDEL) at its C-terminus.</title>
        <authorList>
            <person name="Potter S.M."/>
            <person name="Johnson B.A."/>
            <person name="Henschen A."/>
            <person name="Aswad D.W."/>
            <person name="Guzzetta A.W."/>
        </authorList>
    </citation>
    <scope>PROTEIN SEQUENCE OF 5-11; 48-65; 74-83; 106-136; 144-195 AND 200-225 (ISOFORM 2)</scope>
</reference>
<dbReference type="EC" id="2.1.1.77" evidence="2"/>
<dbReference type="EMBL" id="BC109663">
    <property type="protein sequence ID" value="AAI09664.1"/>
    <property type="molecule type" value="mRNA"/>
</dbReference>
<dbReference type="PIR" id="A43292">
    <property type="entry name" value="A43292"/>
</dbReference>
<dbReference type="RefSeq" id="NP_001073085.1">
    <property type="nucleotide sequence ID" value="NM_001079617.2"/>
</dbReference>
<dbReference type="SMR" id="P15246"/>
<dbReference type="FunCoup" id="P15246">
    <property type="interactions" value="937"/>
</dbReference>
<dbReference type="STRING" id="9913.ENSBTAP00000055150"/>
<dbReference type="PaxDb" id="9913-ENSBTAP00000055150"/>
<dbReference type="PeptideAtlas" id="P15246"/>
<dbReference type="GeneID" id="613854"/>
<dbReference type="KEGG" id="bta:613854"/>
<dbReference type="CTD" id="5110"/>
<dbReference type="eggNOG" id="KOG1661">
    <property type="taxonomic scope" value="Eukaryota"/>
</dbReference>
<dbReference type="HOGENOM" id="CLU_055432_0_4_1"/>
<dbReference type="InParanoid" id="P15246"/>
<dbReference type="OrthoDB" id="73890at2759"/>
<dbReference type="Proteomes" id="UP000009136">
    <property type="component" value="Unplaced"/>
</dbReference>
<dbReference type="GO" id="GO:0005737">
    <property type="term" value="C:cytoplasm"/>
    <property type="evidence" value="ECO:0000318"/>
    <property type="project" value="GO_Central"/>
</dbReference>
<dbReference type="GO" id="GO:0005829">
    <property type="term" value="C:cytosol"/>
    <property type="evidence" value="ECO:0007669"/>
    <property type="project" value="UniProtKB-SubCell"/>
</dbReference>
<dbReference type="GO" id="GO:0004719">
    <property type="term" value="F:protein-L-isoaspartate (D-aspartate) O-methyltransferase activity"/>
    <property type="evidence" value="ECO:0000250"/>
    <property type="project" value="UniProtKB"/>
</dbReference>
<dbReference type="GO" id="GO:0006479">
    <property type="term" value="P:protein methylation"/>
    <property type="evidence" value="ECO:0000250"/>
    <property type="project" value="UniProtKB"/>
</dbReference>
<dbReference type="CDD" id="cd02440">
    <property type="entry name" value="AdoMet_MTases"/>
    <property type="match status" value="1"/>
</dbReference>
<dbReference type="FunFam" id="3.40.50.150:FF:000027">
    <property type="entry name" value="Protein-L-isoaspartate O-methyltransferase"/>
    <property type="match status" value="1"/>
</dbReference>
<dbReference type="Gene3D" id="3.40.50.150">
    <property type="entry name" value="Vaccinia Virus protein VP39"/>
    <property type="match status" value="1"/>
</dbReference>
<dbReference type="InterPro" id="IPR000682">
    <property type="entry name" value="PCMT"/>
</dbReference>
<dbReference type="InterPro" id="IPR029063">
    <property type="entry name" value="SAM-dependent_MTases_sf"/>
</dbReference>
<dbReference type="NCBIfam" id="TIGR00080">
    <property type="entry name" value="pimt"/>
    <property type="match status" value="1"/>
</dbReference>
<dbReference type="PANTHER" id="PTHR11579">
    <property type="entry name" value="PROTEIN-L-ISOASPARTATE O-METHYLTRANSFERASE"/>
    <property type="match status" value="1"/>
</dbReference>
<dbReference type="PANTHER" id="PTHR11579:SF7">
    <property type="entry name" value="PROTEIN-L-ISOASPARTATE(D-ASPARTATE) O-METHYLTRANSFERASE"/>
    <property type="match status" value="1"/>
</dbReference>
<dbReference type="Pfam" id="PF01135">
    <property type="entry name" value="PCMT"/>
    <property type="match status" value="1"/>
</dbReference>
<dbReference type="SUPFAM" id="SSF53335">
    <property type="entry name" value="S-adenosyl-L-methionine-dependent methyltransferases"/>
    <property type="match status" value="1"/>
</dbReference>
<dbReference type="PROSITE" id="PS01279">
    <property type="entry name" value="PCMT"/>
    <property type="match status" value="1"/>
</dbReference>
<feature type="initiator methionine" description="Removed" evidence="1">
    <location>
        <position position="1"/>
    </location>
</feature>
<feature type="chain" id="PRO_0000111874" description="Protein-L-isoaspartate(D-aspartate) O-methyltransferase">
    <location>
        <begin position="2"/>
        <end position="227"/>
    </location>
</feature>
<feature type="active site" evidence="3">
    <location>
        <position position="60"/>
    </location>
</feature>
<feature type="binding site" evidence="1">
    <location>
        <begin position="57"/>
        <end position="60"/>
    </location>
    <ligand>
        <name>S-adenosyl-L-homocysteine</name>
        <dbReference type="ChEBI" id="CHEBI:57856"/>
    </ligand>
</feature>
<feature type="binding site" evidence="1">
    <location>
        <position position="65"/>
    </location>
    <ligand>
        <name>S-adenosyl-L-homocysteine</name>
        <dbReference type="ChEBI" id="CHEBI:57856"/>
    </ligand>
</feature>
<feature type="binding site" evidence="1">
    <location>
        <position position="89"/>
    </location>
    <ligand>
        <name>S-adenosyl-L-homocysteine</name>
        <dbReference type="ChEBI" id="CHEBI:57856"/>
    </ligand>
</feature>
<feature type="binding site" evidence="1">
    <location>
        <begin position="110"/>
        <end position="111"/>
    </location>
    <ligand>
        <name>S-adenosyl-L-homocysteine</name>
        <dbReference type="ChEBI" id="CHEBI:57856"/>
    </ligand>
</feature>
<feature type="binding site" evidence="1">
    <location>
        <begin position="142"/>
        <end position="143"/>
    </location>
    <ligand>
        <name>S-adenosyl-L-homocysteine</name>
        <dbReference type="ChEBI" id="CHEBI:57856"/>
    </ligand>
</feature>
<feature type="binding site" evidence="1">
    <location>
        <position position="217"/>
    </location>
    <ligand>
        <name>S-adenosyl-L-homocysteine</name>
        <dbReference type="ChEBI" id="CHEBI:57856"/>
    </ligand>
</feature>
<feature type="binding site" evidence="1">
    <location>
        <position position="222"/>
    </location>
    <ligand>
        <name>S-adenosyl-L-homocysteine</name>
        <dbReference type="ChEBI" id="CHEBI:57856"/>
    </ligand>
</feature>
<feature type="modified residue" description="N-acetylalanine" evidence="1">
    <location>
        <position position="2"/>
    </location>
</feature>
<feature type="splice variant" id="VSP_012044" description="In isoform 2." evidence="4">
    <original>WK</original>
    <variation>DEL</variation>
    <location>
        <begin position="226"/>
        <end position="227"/>
    </location>
</feature>
<feature type="sequence conflict" description="In Ref. 1; AAI09664." evidence="4" ref="1">
    <original>S</original>
    <variation>T</variation>
    <location>
        <position position="133"/>
    </location>
</feature>